<dbReference type="EC" id="1.14.14.150" evidence="3"/>
<dbReference type="EMBL" id="JF816041">
    <property type="protein sequence ID" value="AEG79727.1"/>
    <property type="molecule type" value="mRNA"/>
</dbReference>
<dbReference type="SMR" id="G3GBK0"/>
<dbReference type="KEGG" id="ag:AEG79727"/>
<dbReference type="BRENDA" id="1.14.14.150">
    <property type="organism ID" value="1385"/>
</dbReference>
<dbReference type="GO" id="GO:0016020">
    <property type="term" value="C:membrane"/>
    <property type="evidence" value="ECO:0007669"/>
    <property type="project" value="UniProtKB-SubCell"/>
</dbReference>
<dbReference type="GO" id="GO:0102934">
    <property type="term" value="F:costunolide synthase activity"/>
    <property type="evidence" value="ECO:0007669"/>
    <property type="project" value="UniProtKB-EC"/>
</dbReference>
<dbReference type="GO" id="GO:0020037">
    <property type="term" value="F:heme binding"/>
    <property type="evidence" value="ECO:0007669"/>
    <property type="project" value="InterPro"/>
</dbReference>
<dbReference type="GO" id="GO:0005506">
    <property type="term" value="F:iron ion binding"/>
    <property type="evidence" value="ECO:0007669"/>
    <property type="project" value="InterPro"/>
</dbReference>
<dbReference type="GO" id="GO:0051762">
    <property type="term" value="P:sesquiterpene biosynthetic process"/>
    <property type="evidence" value="ECO:0007669"/>
    <property type="project" value="UniProtKB-ARBA"/>
</dbReference>
<dbReference type="CDD" id="cd11072">
    <property type="entry name" value="CYP71-like"/>
    <property type="match status" value="1"/>
</dbReference>
<dbReference type="FunFam" id="1.10.630.10:FF:000043">
    <property type="entry name" value="Cytochrome P450 99A2"/>
    <property type="match status" value="1"/>
</dbReference>
<dbReference type="Gene3D" id="1.10.630.10">
    <property type="entry name" value="Cytochrome P450"/>
    <property type="match status" value="1"/>
</dbReference>
<dbReference type="InterPro" id="IPR001128">
    <property type="entry name" value="Cyt_P450"/>
</dbReference>
<dbReference type="InterPro" id="IPR017972">
    <property type="entry name" value="Cyt_P450_CS"/>
</dbReference>
<dbReference type="InterPro" id="IPR002401">
    <property type="entry name" value="Cyt_P450_E_grp-I"/>
</dbReference>
<dbReference type="InterPro" id="IPR036396">
    <property type="entry name" value="Cyt_P450_sf"/>
</dbReference>
<dbReference type="PANTHER" id="PTHR47955:SF13">
    <property type="entry name" value="CYTOCHROME P450"/>
    <property type="match status" value="1"/>
</dbReference>
<dbReference type="PANTHER" id="PTHR47955">
    <property type="entry name" value="CYTOCHROME P450 FAMILY 71 PROTEIN"/>
    <property type="match status" value="1"/>
</dbReference>
<dbReference type="Pfam" id="PF00067">
    <property type="entry name" value="p450"/>
    <property type="match status" value="1"/>
</dbReference>
<dbReference type="PRINTS" id="PR00463">
    <property type="entry name" value="EP450I"/>
</dbReference>
<dbReference type="PRINTS" id="PR00385">
    <property type="entry name" value="P450"/>
</dbReference>
<dbReference type="SUPFAM" id="SSF48264">
    <property type="entry name" value="Cytochrome P450"/>
    <property type="match status" value="1"/>
</dbReference>
<dbReference type="PROSITE" id="PS00086">
    <property type="entry name" value="CYTOCHROME_P450"/>
    <property type="match status" value="1"/>
</dbReference>
<organism>
    <name type="scientific">Cichorium intybus</name>
    <name type="common">Chicory</name>
    <dbReference type="NCBI Taxonomy" id="13427"/>
    <lineage>
        <taxon>Eukaryota</taxon>
        <taxon>Viridiplantae</taxon>
        <taxon>Streptophyta</taxon>
        <taxon>Embryophyta</taxon>
        <taxon>Tracheophyta</taxon>
        <taxon>Spermatophyta</taxon>
        <taxon>Magnoliopsida</taxon>
        <taxon>eudicotyledons</taxon>
        <taxon>Gunneridae</taxon>
        <taxon>Pentapetalae</taxon>
        <taxon>asterids</taxon>
        <taxon>campanulids</taxon>
        <taxon>Asterales</taxon>
        <taxon>Asteraceae</taxon>
        <taxon>Cichorioideae</taxon>
        <taxon>Cichorieae</taxon>
        <taxon>Cichoriinae</taxon>
        <taxon>Cichorium</taxon>
    </lineage>
</organism>
<reference key="1">
    <citation type="journal article" date="2011" name="PLoS ONE">
        <title>Reconstitution of the costunolide biosynthetic pathway in yeast and Nicotiana benthamiana.</title>
        <authorList>
            <person name="Liu Q."/>
            <person name="Majdi M."/>
            <person name="Cankar K."/>
            <person name="Goedbloed M."/>
            <person name="Charnikhova T."/>
            <person name="Verstappen F.W."/>
            <person name="de Vos R.C."/>
            <person name="Beekwilder J."/>
            <person name="van der Krol S."/>
            <person name="Bouwmeester H.J."/>
        </authorList>
    </citation>
    <scope>NUCLEOTIDE SEQUENCE [MRNA]</scope>
    <scope>FUNCTION</scope>
    <scope>CATALYTIC ACTIVITY</scope>
</reference>
<evidence type="ECO:0000250" key="1"/>
<evidence type="ECO:0000255" key="2"/>
<evidence type="ECO:0000269" key="3">
    <source>
    </source>
</evidence>
<evidence type="ECO:0000305" key="4"/>
<accession>G3GBK0</accession>
<comment type="function">
    <text evidence="3">Hydroxylates germacrene A acid to 6-alpha-hydroxy-germacrne A acid, a precursor of sesquiterpene lactones that spontaneously undergoes a lactonization which yields costunolide. Costunolide can then spontaneously conjugate to glutathione or cysteine.</text>
</comment>
<comment type="catalytic activity">
    <reaction evidence="3">
        <text>germacra-1(10),4,11(13)-trien-12-oate + reduced [NADPH--hemoprotein reductase] + O2 = (+)-costunolide + oxidized [NADPH--hemoprotein reductase] + 2 H2O</text>
        <dbReference type="Rhea" id="RHEA:28230"/>
        <dbReference type="Rhea" id="RHEA-COMP:11964"/>
        <dbReference type="Rhea" id="RHEA-COMP:11965"/>
        <dbReference type="ChEBI" id="CHEBI:3900"/>
        <dbReference type="ChEBI" id="CHEBI:15377"/>
        <dbReference type="ChEBI" id="CHEBI:15379"/>
        <dbReference type="ChEBI" id="CHEBI:57618"/>
        <dbReference type="ChEBI" id="CHEBI:58210"/>
        <dbReference type="ChEBI" id="CHEBI:61301"/>
        <dbReference type="EC" id="1.14.14.150"/>
    </reaction>
</comment>
<comment type="cofactor">
    <cofactor evidence="1">
        <name>heme</name>
        <dbReference type="ChEBI" id="CHEBI:30413"/>
    </cofactor>
</comment>
<comment type="subcellular location">
    <subcellularLocation>
        <location evidence="4">Membrane</location>
        <topology evidence="4">Single-pass membrane protein</topology>
    </subcellularLocation>
</comment>
<comment type="similarity">
    <text evidence="4">Belongs to the cytochrome P450 family.</text>
</comment>
<protein>
    <recommendedName>
        <fullName>Costunolide synthase</fullName>
        <shortName>CiCOS</shortName>
        <ecNumber evidence="3">1.14.14.150</ecNumber>
    </recommendedName>
    <alternativeName>
        <fullName>Cytochrome P450 71BL3</fullName>
    </alternativeName>
</protein>
<name>C7BL3_CICIN</name>
<gene>
    <name type="primary">CYP71BL3</name>
    <name type="synonym">COS</name>
</gene>
<keyword id="KW-0349">Heme</keyword>
<keyword id="KW-0408">Iron</keyword>
<keyword id="KW-0472">Membrane</keyword>
<keyword id="KW-0479">Metal-binding</keyword>
<keyword id="KW-0503">Monooxygenase</keyword>
<keyword id="KW-0560">Oxidoreductase</keyword>
<keyword id="KW-0812">Transmembrane</keyword>
<keyword id="KW-1133">Transmembrane helix</keyword>
<proteinExistence type="evidence at protein level"/>
<sequence>MEPLTIVSLVVASLFLFAFWALSPKTSKNLPPGPPKLPIIGNIHQLKSPTPHRVLRNLARKYGPIMHLQLGQVSTVVVSTPRLAREIMKTNDISFADRPTTTTSQIFFYKAQDIGWAPYGEYWRQMKKICTLELLSAKKVRSFSSIREEELSRISKVLESQAGTPINFTEMTVEMVNNVICKATLGDSCKDQATLIEVLYDVLKTLSAFNLASYYPGLQFLNVILGKKAKWLKMQKQLDDILEDVLKEHRSKGSNKSDQEDLVDVLLRVKDTGGLDFTVTDEHVKAVVLDMLTAGTDTSSATLEWAMTELMRNPHMMKRAQDEVRSVVKGNTITETDLQSLHYLKLIVKETLRLHAPTPLLVPRECRQDCNVDGYDIPAKTKILVNAWACGTDPDSWKDPESFIPERFENCPINYMGADFEFIPFGAGRRICPGLTFGLSMVEYPLANFLYHFDWKLPNGLKPHELDITEITGISTSLKHQLKIVPMIPKSIAK</sequence>
<feature type="chain" id="PRO_0000421932" description="Costunolide synthase">
    <location>
        <begin position="1"/>
        <end position="494"/>
    </location>
</feature>
<feature type="transmembrane region" description="Helical" evidence="2">
    <location>
        <begin position="3"/>
        <end position="23"/>
    </location>
</feature>
<feature type="binding site" description="axial binding residue" evidence="1">
    <location>
        <position position="432"/>
    </location>
    <ligand>
        <name>heme</name>
        <dbReference type="ChEBI" id="CHEBI:30413"/>
    </ligand>
    <ligandPart>
        <name>Fe</name>
        <dbReference type="ChEBI" id="CHEBI:18248"/>
    </ligandPart>
</feature>